<name>ATPB_NOCFA</name>
<gene>
    <name evidence="1" type="primary">atpD</name>
    <name type="ordered locus">NFA_10650</name>
</gene>
<feature type="chain" id="PRO_0000254320" description="ATP synthase subunit beta">
    <location>
        <begin position="1"/>
        <end position="482"/>
    </location>
</feature>
<feature type="binding site" evidence="1">
    <location>
        <begin position="168"/>
        <end position="175"/>
    </location>
    <ligand>
        <name>ATP</name>
        <dbReference type="ChEBI" id="CHEBI:30616"/>
    </ligand>
</feature>
<accession>Q5Z0Y1</accession>
<comment type="function">
    <text evidence="1">Produces ATP from ADP in the presence of a proton gradient across the membrane. The catalytic sites are hosted primarily by the beta subunits.</text>
</comment>
<comment type="catalytic activity">
    <reaction evidence="1">
        <text>ATP + H2O + 4 H(+)(in) = ADP + phosphate + 5 H(+)(out)</text>
        <dbReference type="Rhea" id="RHEA:57720"/>
        <dbReference type="ChEBI" id="CHEBI:15377"/>
        <dbReference type="ChEBI" id="CHEBI:15378"/>
        <dbReference type="ChEBI" id="CHEBI:30616"/>
        <dbReference type="ChEBI" id="CHEBI:43474"/>
        <dbReference type="ChEBI" id="CHEBI:456216"/>
        <dbReference type="EC" id="7.1.2.2"/>
    </reaction>
</comment>
<comment type="subunit">
    <text evidence="1">F-type ATPases have 2 components, CF(1) - the catalytic core - and CF(0) - the membrane proton channel. CF(1) has five subunits: alpha(3), beta(3), gamma(1), delta(1), epsilon(1). CF(0) has three main subunits: a(1), b(2) and c(9-12). The alpha and beta chains form an alternating ring which encloses part of the gamma chain. CF(1) is attached to CF(0) by a central stalk formed by the gamma and epsilon chains, while a peripheral stalk is formed by the delta and b chains.</text>
</comment>
<comment type="subcellular location">
    <subcellularLocation>
        <location evidence="1">Cell membrane</location>
        <topology evidence="1">Peripheral membrane protein</topology>
    </subcellularLocation>
</comment>
<comment type="similarity">
    <text evidence="1">Belongs to the ATPase alpha/beta chains family.</text>
</comment>
<dbReference type="EC" id="7.1.2.2" evidence="1"/>
<dbReference type="EMBL" id="AP006618">
    <property type="protein sequence ID" value="BAD55910.1"/>
    <property type="molecule type" value="Genomic_DNA"/>
</dbReference>
<dbReference type="RefSeq" id="WP_011207595.1">
    <property type="nucleotide sequence ID" value="NC_006361.1"/>
</dbReference>
<dbReference type="SMR" id="Q5Z0Y1"/>
<dbReference type="STRING" id="247156.NFA_10650"/>
<dbReference type="GeneID" id="61131887"/>
<dbReference type="KEGG" id="nfa:NFA_10650"/>
<dbReference type="eggNOG" id="COG0055">
    <property type="taxonomic scope" value="Bacteria"/>
</dbReference>
<dbReference type="HOGENOM" id="CLU_022398_0_2_11"/>
<dbReference type="OrthoDB" id="9801639at2"/>
<dbReference type="Proteomes" id="UP000006820">
    <property type="component" value="Chromosome"/>
</dbReference>
<dbReference type="GO" id="GO:0005886">
    <property type="term" value="C:plasma membrane"/>
    <property type="evidence" value="ECO:0007669"/>
    <property type="project" value="UniProtKB-SubCell"/>
</dbReference>
<dbReference type="GO" id="GO:0045259">
    <property type="term" value="C:proton-transporting ATP synthase complex"/>
    <property type="evidence" value="ECO:0007669"/>
    <property type="project" value="UniProtKB-KW"/>
</dbReference>
<dbReference type="GO" id="GO:0005524">
    <property type="term" value="F:ATP binding"/>
    <property type="evidence" value="ECO:0007669"/>
    <property type="project" value="UniProtKB-UniRule"/>
</dbReference>
<dbReference type="GO" id="GO:0016887">
    <property type="term" value="F:ATP hydrolysis activity"/>
    <property type="evidence" value="ECO:0007669"/>
    <property type="project" value="InterPro"/>
</dbReference>
<dbReference type="GO" id="GO:0046933">
    <property type="term" value="F:proton-transporting ATP synthase activity, rotational mechanism"/>
    <property type="evidence" value="ECO:0007669"/>
    <property type="project" value="UniProtKB-UniRule"/>
</dbReference>
<dbReference type="CDD" id="cd18110">
    <property type="entry name" value="ATP-synt_F1_beta_C"/>
    <property type="match status" value="1"/>
</dbReference>
<dbReference type="CDD" id="cd18115">
    <property type="entry name" value="ATP-synt_F1_beta_N"/>
    <property type="match status" value="1"/>
</dbReference>
<dbReference type="CDD" id="cd01133">
    <property type="entry name" value="F1-ATPase_beta_CD"/>
    <property type="match status" value="1"/>
</dbReference>
<dbReference type="FunFam" id="1.10.1140.10:FF:000005">
    <property type="entry name" value="ATP synthase subunit beta"/>
    <property type="match status" value="1"/>
</dbReference>
<dbReference type="FunFam" id="2.40.10.170:FF:000005">
    <property type="entry name" value="ATP synthase subunit beta"/>
    <property type="match status" value="1"/>
</dbReference>
<dbReference type="FunFam" id="3.40.50.300:FF:000004">
    <property type="entry name" value="ATP synthase subunit beta"/>
    <property type="match status" value="1"/>
</dbReference>
<dbReference type="Gene3D" id="2.40.10.170">
    <property type="match status" value="1"/>
</dbReference>
<dbReference type="Gene3D" id="1.10.1140.10">
    <property type="entry name" value="Bovine Mitochondrial F1-atpase, Atp Synthase Beta Chain, Chain D, domain 3"/>
    <property type="match status" value="1"/>
</dbReference>
<dbReference type="Gene3D" id="3.40.50.300">
    <property type="entry name" value="P-loop containing nucleotide triphosphate hydrolases"/>
    <property type="match status" value="1"/>
</dbReference>
<dbReference type="HAMAP" id="MF_01347">
    <property type="entry name" value="ATP_synth_beta_bact"/>
    <property type="match status" value="1"/>
</dbReference>
<dbReference type="InterPro" id="IPR003593">
    <property type="entry name" value="AAA+_ATPase"/>
</dbReference>
<dbReference type="InterPro" id="IPR055190">
    <property type="entry name" value="ATP-synt_VA_C"/>
</dbReference>
<dbReference type="InterPro" id="IPR005722">
    <property type="entry name" value="ATP_synth_F1_bsu"/>
</dbReference>
<dbReference type="InterPro" id="IPR020003">
    <property type="entry name" value="ATPase_a/bsu_AS"/>
</dbReference>
<dbReference type="InterPro" id="IPR050053">
    <property type="entry name" value="ATPase_alpha/beta_chains"/>
</dbReference>
<dbReference type="InterPro" id="IPR004100">
    <property type="entry name" value="ATPase_F1/V1/A1_a/bsu_N"/>
</dbReference>
<dbReference type="InterPro" id="IPR036121">
    <property type="entry name" value="ATPase_F1/V1/A1_a/bsu_N_sf"/>
</dbReference>
<dbReference type="InterPro" id="IPR000194">
    <property type="entry name" value="ATPase_F1/V1/A1_a/bsu_nucl-bd"/>
</dbReference>
<dbReference type="InterPro" id="IPR024034">
    <property type="entry name" value="ATPase_F1/V1_b/a_C"/>
</dbReference>
<dbReference type="InterPro" id="IPR027417">
    <property type="entry name" value="P-loop_NTPase"/>
</dbReference>
<dbReference type="NCBIfam" id="TIGR01039">
    <property type="entry name" value="atpD"/>
    <property type="match status" value="1"/>
</dbReference>
<dbReference type="PANTHER" id="PTHR15184">
    <property type="entry name" value="ATP SYNTHASE"/>
    <property type="match status" value="1"/>
</dbReference>
<dbReference type="PANTHER" id="PTHR15184:SF71">
    <property type="entry name" value="ATP SYNTHASE SUBUNIT BETA, MITOCHONDRIAL"/>
    <property type="match status" value="1"/>
</dbReference>
<dbReference type="Pfam" id="PF00006">
    <property type="entry name" value="ATP-synt_ab"/>
    <property type="match status" value="1"/>
</dbReference>
<dbReference type="Pfam" id="PF02874">
    <property type="entry name" value="ATP-synt_ab_N"/>
    <property type="match status" value="1"/>
</dbReference>
<dbReference type="Pfam" id="PF22919">
    <property type="entry name" value="ATP-synt_VA_C"/>
    <property type="match status" value="1"/>
</dbReference>
<dbReference type="SMART" id="SM00382">
    <property type="entry name" value="AAA"/>
    <property type="match status" value="1"/>
</dbReference>
<dbReference type="SUPFAM" id="SSF47917">
    <property type="entry name" value="C-terminal domain of alpha and beta subunits of F1 ATP synthase"/>
    <property type="match status" value="1"/>
</dbReference>
<dbReference type="SUPFAM" id="SSF50615">
    <property type="entry name" value="N-terminal domain of alpha and beta subunits of F1 ATP synthase"/>
    <property type="match status" value="1"/>
</dbReference>
<dbReference type="SUPFAM" id="SSF52540">
    <property type="entry name" value="P-loop containing nucleoside triphosphate hydrolases"/>
    <property type="match status" value="1"/>
</dbReference>
<dbReference type="PROSITE" id="PS00152">
    <property type="entry name" value="ATPASE_ALPHA_BETA"/>
    <property type="match status" value="1"/>
</dbReference>
<protein>
    <recommendedName>
        <fullName evidence="1">ATP synthase subunit beta</fullName>
        <ecNumber evidence="1">7.1.2.2</ecNumber>
    </recommendedName>
    <alternativeName>
        <fullName evidence="1">ATP synthase F1 sector subunit beta</fullName>
    </alternativeName>
    <alternativeName>
        <fullName evidence="1">F-ATPase subunit beta</fullName>
    </alternativeName>
</protein>
<sequence>MTAAVTQDNTSRTGAAAGRVVRVIGPVVDVEFPRGAIPELFNALHADITLTSVAKTLTLEVAQHLGDNIVRTISMQPTDGLVRGATVTDTGKPISVPVGDVVKGHVFNALGDCLDTPGLGRDGEQWGIHRKPPSFDQLEGKTELLETGIKVIDLLTPYVKGGKIGLFGGAGVGKTVLIQEMITRIAREFSGTSVFAGVGERTREGTDLHLEMEEMGVLQDTALVFGQMDEPPGTRMRVALSALTMAEYFRDVQHQDVLLFIDNIFRFTQAGSEVSTLLGRMPSAVGYQPTLADEMGELQERITSTRGRSITSLQAIYVPADDYTDPAPATTFAHLDATTELSRPISQKGIYPAVDPLTSTSRILEASIVGDRHFAVANEVKRILQKYKELQDIIAILGMDELSEEDKVLVGRARRLEKFLGQNFIVAEKFTGQPGSVVPLEQTIDDFDRVCKGEFDHYPEQAFNSCGGLDDVEKAAKKIAGK</sequence>
<proteinExistence type="inferred from homology"/>
<organism>
    <name type="scientific">Nocardia farcinica (strain IFM 10152)</name>
    <dbReference type="NCBI Taxonomy" id="247156"/>
    <lineage>
        <taxon>Bacteria</taxon>
        <taxon>Bacillati</taxon>
        <taxon>Actinomycetota</taxon>
        <taxon>Actinomycetes</taxon>
        <taxon>Mycobacteriales</taxon>
        <taxon>Nocardiaceae</taxon>
        <taxon>Nocardia</taxon>
    </lineage>
</organism>
<evidence type="ECO:0000255" key="1">
    <source>
        <dbReference type="HAMAP-Rule" id="MF_01347"/>
    </source>
</evidence>
<reference key="1">
    <citation type="journal article" date="2004" name="Proc. Natl. Acad. Sci. U.S.A.">
        <title>The complete genomic sequence of Nocardia farcinica IFM 10152.</title>
        <authorList>
            <person name="Ishikawa J."/>
            <person name="Yamashita A."/>
            <person name="Mikami Y."/>
            <person name="Hoshino Y."/>
            <person name="Kurita H."/>
            <person name="Hotta K."/>
            <person name="Shiba T."/>
            <person name="Hattori M."/>
        </authorList>
    </citation>
    <scope>NUCLEOTIDE SEQUENCE [LARGE SCALE GENOMIC DNA]</scope>
    <source>
        <strain>IFM 10152</strain>
    </source>
</reference>
<keyword id="KW-0066">ATP synthesis</keyword>
<keyword id="KW-0067">ATP-binding</keyword>
<keyword id="KW-1003">Cell membrane</keyword>
<keyword id="KW-0139">CF(1)</keyword>
<keyword id="KW-0375">Hydrogen ion transport</keyword>
<keyword id="KW-0406">Ion transport</keyword>
<keyword id="KW-0472">Membrane</keyword>
<keyword id="KW-0547">Nucleotide-binding</keyword>
<keyword id="KW-1185">Reference proteome</keyword>
<keyword id="KW-1278">Translocase</keyword>
<keyword id="KW-0813">Transport</keyword>